<proteinExistence type="inferred from homology"/>
<evidence type="ECO:0000255" key="1">
    <source>
        <dbReference type="HAMAP-Rule" id="MF_02002"/>
    </source>
</evidence>
<gene>
    <name evidence="1" type="primary">ileS</name>
    <name type="ordered locus">SDY_0048</name>
</gene>
<keyword id="KW-0007">Acetylation</keyword>
<keyword id="KW-0030">Aminoacyl-tRNA synthetase</keyword>
<keyword id="KW-0067">ATP-binding</keyword>
<keyword id="KW-0963">Cytoplasm</keyword>
<keyword id="KW-0436">Ligase</keyword>
<keyword id="KW-0479">Metal-binding</keyword>
<keyword id="KW-0547">Nucleotide-binding</keyword>
<keyword id="KW-0648">Protein biosynthesis</keyword>
<keyword id="KW-1185">Reference proteome</keyword>
<keyword id="KW-0862">Zinc</keyword>
<accession>Q32K71</accession>
<dbReference type="EC" id="6.1.1.5" evidence="1"/>
<dbReference type="EMBL" id="CP000034">
    <property type="protein sequence ID" value="ABB60286.1"/>
    <property type="molecule type" value="Genomic_DNA"/>
</dbReference>
<dbReference type="RefSeq" id="WP_001286837.1">
    <property type="nucleotide sequence ID" value="NC_007606.1"/>
</dbReference>
<dbReference type="RefSeq" id="YP_401775.1">
    <property type="nucleotide sequence ID" value="NC_007606.1"/>
</dbReference>
<dbReference type="SMR" id="Q32K71"/>
<dbReference type="STRING" id="300267.SDY_0048"/>
<dbReference type="EnsemblBacteria" id="ABB60286">
    <property type="protein sequence ID" value="ABB60286"/>
    <property type="gene ID" value="SDY_0048"/>
</dbReference>
<dbReference type="KEGG" id="sdy:SDY_0048"/>
<dbReference type="PATRIC" id="fig|300267.13.peg.52"/>
<dbReference type="HOGENOM" id="CLU_001493_7_1_6"/>
<dbReference type="Proteomes" id="UP000002716">
    <property type="component" value="Chromosome"/>
</dbReference>
<dbReference type="GO" id="GO:0005829">
    <property type="term" value="C:cytosol"/>
    <property type="evidence" value="ECO:0007669"/>
    <property type="project" value="TreeGrafter"/>
</dbReference>
<dbReference type="GO" id="GO:0002161">
    <property type="term" value="F:aminoacyl-tRNA deacylase activity"/>
    <property type="evidence" value="ECO:0007669"/>
    <property type="project" value="InterPro"/>
</dbReference>
<dbReference type="GO" id="GO:0005524">
    <property type="term" value="F:ATP binding"/>
    <property type="evidence" value="ECO:0007669"/>
    <property type="project" value="UniProtKB-UniRule"/>
</dbReference>
<dbReference type="GO" id="GO:0004822">
    <property type="term" value="F:isoleucine-tRNA ligase activity"/>
    <property type="evidence" value="ECO:0007669"/>
    <property type="project" value="UniProtKB-UniRule"/>
</dbReference>
<dbReference type="GO" id="GO:0000049">
    <property type="term" value="F:tRNA binding"/>
    <property type="evidence" value="ECO:0007669"/>
    <property type="project" value="InterPro"/>
</dbReference>
<dbReference type="GO" id="GO:0008270">
    <property type="term" value="F:zinc ion binding"/>
    <property type="evidence" value="ECO:0007669"/>
    <property type="project" value="UniProtKB-UniRule"/>
</dbReference>
<dbReference type="GO" id="GO:0006428">
    <property type="term" value="P:isoleucyl-tRNA aminoacylation"/>
    <property type="evidence" value="ECO:0007669"/>
    <property type="project" value="UniProtKB-UniRule"/>
</dbReference>
<dbReference type="CDD" id="cd07960">
    <property type="entry name" value="Anticodon_Ia_Ile_BEm"/>
    <property type="match status" value="1"/>
</dbReference>
<dbReference type="CDD" id="cd00818">
    <property type="entry name" value="IleRS_core"/>
    <property type="match status" value="1"/>
</dbReference>
<dbReference type="FunFam" id="1.10.730.20:FF:000001">
    <property type="entry name" value="Isoleucine--tRNA ligase"/>
    <property type="match status" value="1"/>
</dbReference>
<dbReference type="FunFam" id="3.40.50.620:FF:000042">
    <property type="entry name" value="Isoleucine--tRNA ligase"/>
    <property type="match status" value="1"/>
</dbReference>
<dbReference type="FunFam" id="3.40.50.620:FF:000048">
    <property type="entry name" value="Isoleucine--tRNA ligase"/>
    <property type="match status" value="1"/>
</dbReference>
<dbReference type="FunFam" id="3.90.740.10:FF:000002">
    <property type="entry name" value="Isoleucine--tRNA ligase"/>
    <property type="match status" value="1"/>
</dbReference>
<dbReference type="Gene3D" id="1.10.730.20">
    <property type="match status" value="1"/>
</dbReference>
<dbReference type="Gene3D" id="3.40.50.620">
    <property type="entry name" value="HUPs"/>
    <property type="match status" value="2"/>
</dbReference>
<dbReference type="Gene3D" id="3.90.740.10">
    <property type="entry name" value="Valyl/Leucyl/Isoleucyl-tRNA synthetase, editing domain"/>
    <property type="match status" value="1"/>
</dbReference>
<dbReference type="HAMAP" id="MF_02002">
    <property type="entry name" value="Ile_tRNA_synth_type1"/>
    <property type="match status" value="1"/>
</dbReference>
<dbReference type="InterPro" id="IPR001412">
    <property type="entry name" value="aa-tRNA-synth_I_CS"/>
</dbReference>
<dbReference type="InterPro" id="IPR002300">
    <property type="entry name" value="aa-tRNA-synth_Ia"/>
</dbReference>
<dbReference type="InterPro" id="IPR033708">
    <property type="entry name" value="Anticodon_Ile_BEm"/>
</dbReference>
<dbReference type="InterPro" id="IPR002301">
    <property type="entry name" value="Ile-tRNA-ligase"/>
</dbReference>
<dbReference type="InterPro" id="IPR023585">
    <property type="entry name" value="Ile-tRNA-ligase_type1"/>
</dbReference>
<dbReference type="InterPro" id="IPR050081">
    <property type="entry name" value="Ile-tRNA_ligase"/>
</dbReference>
<dbReference type="InterPro" id="IPR013155">
    <property type="entry name" value="M/V/L/I-tRNA-synth_anticd-bd"/>
</dbReference>
<dbReference type="InterPro" id="IPR014729">
    <property type="entry name" value="Rossmann-like_a/b/a_fold"/>
</dbReference>
<dbReference type="InterPro" id="IPR009080">
    <property type="entry name" value="tRNAsynth_Ia_anticodon-bd"/>
</dbReference>
<dbReference type="InterPro" id="IPR009008">
    <property type="entry name" value="Val/Leu/Ile-tRNA-synth_edit"/>
</dbReference>
<dbReference type="InterPro" id="IPR010663">
    <property type="entry name" value="Znf_FPG/IleRS"/>
</dbReference>
<dbReference type="NCBIfam" id="TIGR00392">
    <property type="entry name" value="ileS"/>
    <property type="match status" value="1"/>
</dbReference>
<dbReference type="PANTHER" id="PTHR42765:SF1">
    <property type="entry name" value="ISOLEUCINE--TRNA LIGASE, MITOCHONDRIAL"/>
    <property type="match status" value="1"/>
</dbReference>
<dbReference type="PANTHER" id="PTHR42765">
    <property type="entry name" value="SOLEUCYL-TRNA SYNTHETASE"/>
    <property type="match status" value="1"/>
</dbReference>
<dbReference type="Pfam" id="PF08264">
    <property type="entry name" value="Anticodon_1"/>
    <property type="match status" value="1"/>
</dbReference>
<dbReference type="Pfam" id="PF00133">
    <property type="entry name" value="tRNA-synt_1"/>
    <property type="match status" value="1"/>
</dbReference>
<dbReference type="Pfam" id="PF06827">
    <property type="entry name" value="zf-FPG_IleRS"/>
    <property type="match status" value="1"/>
</dbReference>
<dbReference type="PRINTS" id="PR00984">
    <property type="entry name" value="TRNASYNTHILE"/>
</dbReference>
<dbReference type="SUPFAM" id="SSF47323">
    <property type="entry name" value="Anticodon-binding domain of a subclass of class I aminoacyl-tRNA synthetases"/>
    <property type="match status" value="1"/>
</dbReference>
<dbReference type="SUPFAM" id="SSF52374">
    <property type="entry name" value="Nucleotidylyl transferase"/>
    <property type="match status" value="1"/>
</dbReference>
<dbReference type="SUPFAM" id="SSF50677">
    <property type="entry name" value="ValRS/IleRS/LeuRS editing domain"/>
    <property type="match status" value="1"/>
</dbReference>
<dbReference type="PROSITE" id="PS00178">
    <property type="entry name" value="AA_TRNA_LIGASE_I"/>
    <property type="match status" value="1"/>
</dbReference>
<sequence length="938" mass="104325">MSDYKSTLNLPETGFPMRGDLAKREPGMLARWTDDDLYGIIRAAKKGKKTFILHDGPPYANGSIHIGHSVNKILKDIIVKSKGLSGYDSPYVPGWDCHGLPIELKVEQEYGKPGEKFTAAEFRAKCREYAATQVDGQRKDFIRLGVLGDWSHPYLTMDFKTEANIIRALGKIIGNGHLHKGAKPVHWCVDCRSALAEAEVEYYDKTSPSIDVAFQAIDQDALKAKFAVSNVNGPISLVIWTTTPWTLPANRAISIAPDFDYALVQIDSQAVILAKDLVESVMQRIGVTDYTILGTVKGAELELLRFTHPFMGFDVPAILGDHVTLDAGTGAVHTAPGHGPDDYVIGQKYGLETANPVGPDGTYLPGTYPTLDGVNVFKANDIVVALLQEKGALLHVEKMQHSYPCCWRHKTPIIFRATPQWFVSMDQKGLRAQSLKEIKGVQWIPDWGQARIESMVANRPDWCISRQRTWGVPMSLFVHKDTEELHPRTLELMEEVAKRVEVDGIQAWWDLDAKELLGDEADQYVKVPDTLDVWFDSGSTHSSVVDVRPEFAGHAADMYLEGSDQHRGWFMSSLMISTAMKGKAPYRQVLTHGFTVDGQGRKMSKSIGNTVSPQDVMNKLGADILRLWVASTDYTGEMAVSDEILKRAADSYRRIRNTARFLLANLNGFDPAKDMVKPEEMVVLDRWAVGCAKAAQEDILKAYEAYDFHEVVQRLMRFCSVEMGSFYLDIIKDRQYTAKADSVARRSCQTALYHIAEALVRWMAPILSFTADEVWGYLPGEREKYVFTGEWYEGLFGLADSEAMNDAFWDELLKVRGEVNKVIEQARADKKVGGSLEAAVTLYAEPELAAKLTALGDELRFVLLTSGATVADYNDAPADAQQSEVLKGLKVALSKAEGEKCPRCWHYTQDVGKVAEHAEICGRCVSNVAGDGEKRKFA</sequence>
<reference key="1">
    <citation type="journal article" date="2005" name="Nucleic Acids Res.">
        <title>Genome dynamics and diversity of Shigella species, the etiologic agents of bacillary dysentery.</title>
        <authorList>
            <person name="Yang F."/>
            <person name="Yang J."/>
            <person name="Zhang X."/>
            <person name="Chen L."/>
            <person name="Jiang Y."/>
            <person name="Yan Y."/>
            <person name="Tang X."/>
            <person name="Wang J."/>
            <person name="Xiong Z."/>
            <person name="Dong J."/>
            <person name="Xue Y."/>
            <person name="Zhu Y."/>
            <person name="Xu X."/>
            <person name="Sun L."/>
            <person name="Chen S."/>
            <person name="Nie H."/>
            <person name="Peng J."/>
            <person name="Xu J."/>
            <person name="Wang Y."/>
            <person name="Yuan Z."/>
            <person name="Wen Y."/>
            <person name="Yao Z."/>
            <person name="Shen Y."/>
            <person name="Qiang B."/>
            <person name="Hou Y."/>
            <person name="Yu J."/>
            <person name="Jin Q."/>
        </authorList>
    </citation>
    <scope>NUCLEOTIDE SEQUENCE [LARGE SCALE GENOMIC DNA]</scope>
    <source>
        <strain>Sd197</strain>
    </source>
</reference>
<feature type="chain" id="PRO_1000022125" description="Isoleucine--tRNA ligase">
    <location>
        <begin position="1"/>
        <end position="938"/>
    </location>
</feature>
<feature type="short sequence motif" description="'HIGH' region">
    <location>
        <begin position="58"/>
        <end position="68"/>
    </location>
</feature>
<feature type="short sequence motif" description="'KMSKS' region">
    <location>
        <begin position="602"/>
        <end position="606"/>
    </location>
</feature>
<feature type="binding site" evidence="1">
    <location>
        <position position="561"/>
    </location>
    <ligand>
        <name>L-isoleucyl-5'-AMP</name>
        <dbReference type="ChEBI" id="CHEBI:178002"/>
    </ligand>
</feature>
<feature type="binding site" evidence="1">
    <location>
        <position position="605"/>
    </location>
    <ligand>
        <name>ATP</name>
        <dbReference type="ChEBI" id="CHEBI:30616"/>
    </ligand>
</feature>
<feature type="binding site" evidence="1">
    <location>
        <position position="901"/>
    </location>
    <ligand>
        <name>Zn(2+)</name>
        <dbReference type="ChEBI" id="CHEBI:29105"/>
    </ligand>
</feature>
<feature type="binding site" evidence="1">
    <location>
        <position position="904"/>
    </location>
    <ligand>
        <name>Zn(2+)</name>
        <dbReference type="ChEBI" id="CHEBI:29105"/>
    </ligand>
</feature>
<feature type="binding site" evidence="1">
    <location>
        <position position="921"/>
    </location>
    <ligand>
        <name>Zn(2+)</name>
        <dbReference type="ChEBI" id="CHEBI:29105"/>
    </ligand>
</feature>
<feature type="binding site" evidence="1">
    <location>
        <position position="924"/>
    </location>
    <ligand>
        <name>Zn(2+)</name>
        <dbReference type="ChEBI" id="CHEBI:29105"/>
    </ligand>
</feature>
<feature type="modified residue" description="N6-acetyllysine" evidence="1">
    <location>
        <position position="183"/>
    </location>
</feature>
<protein>
    <recommendedName>
        <fullName evidence="1">Isoleucine--tRNA ligase</fullName>
        <ecNumber evidence="1">6.1.1.5</ecNumber>
    </recommendedName>
    <alternativeName>
        <fullName evidence="1">Isoleucyl-tRNA synthetase</fullName>
        <shortName evidence="1">IleRS</shortName>
    </alternativeName>
</protein>
<name>SYI_SHIDS</name>
<organism>
    <name type="scientific">Shigella dysenteriae serotype 1 (strain Sd197)</name>
    <dbReference type="NCBI Taxonomy" id="300267"/>
    <lineage>
        <taxon>Bacteria</taxon>
        <taxon>Pseudomonadati</taxon>
        <taxon>Pseudomonadota</taxon>
        <taxon>Gammaproteobacteria</taxon>
        <taxon>Enterobacterales</taxon>
        <taxon>Enterobacteriaceae</taxon>
        <taxon>Shigella</taxon>
    </lineage>
</organism>
<comment type="function">
    <text evidence="1">Catalyzes the attachment of isoleucine to tRNA(Ile). As IleRS can inadvertently accommodate and process structurally similar amino acids such as valine, to avoid such errors it has two additional distinct tRNA(Ile)-dependent editing activities. One activity is designated as 'pretransfer' editing and involves the hydrolysis of activated Val-AMP. The other activity is designated 'posttransfer' editing and involves deacylation of mischarged Val-tRNA(Ile).</text>
</comment>
<comment type="catalytic activity">
    <reaction evidence="1">
        <text>tRNA(Ile) + L-isoleucine + ATP = L-isoleucyl-tRNA(Ile) + AMP + diphosphate</text>
        <dbReference type="Rhea" id="RHEA:11060"/>
        <dbReference type="Rhea" id="RHEA-COMP:9666"/>
        <dbReference type="Rhea" id="RHEA-COMP:9695"/>
        <dbReference type="ChEBI" id="CHEBI:30616"/>
        <dbReference type="ChEBI" id="CHEBI:33019"/>
        <dbReference type="ChEBI" id="CHEBI:58045"/>
        <dbReference type="ChEBI" id="CHEBI:78442"/>
        <dbReference type="ChEBI" id="CHEBI:78528"/>
        <dbReference type="ChEBI" id="CHEBI:456215"/>
        <dbReference type="EC" id="6.1.1.5"/>
    </reaction>
</comment>
<comment type="cofactor">
    <cofactor evidence="1">
        <name>Zn(2+)</name>
        <dbReference type="ChEBI" id="CHEBI:29105"/>
    </cofactor>
    <text evidence="1">Binds 1 zinc ion per subunit.</text>
</comment>
<comment type="subunit">
    <text evidence="1">Monomer.</text>
</comment>
<comment type="subcellular location">
    <subcellularLocation>
        <location evidence="1">Cytoplasm</location>
    </subcellularLocation>
</comment>
<comment type="domain">
    <text evidence="1">IleRS has two distinct active sites: one for aminoacylation and one for editing. The misactivated valine is translocated from the active site to the editing site, which sterically excludes the correctly activated isoleucine. The single editing site contains two valyl binding pockets, one specific for each substrate (Val-AMP or Val-tRNA(Ile)).</text>
</comment>
<comment type="similarity">
    <text evidence="1">Belongs to the class-I aminoacyl-tRNA synthetase family. IleS type 1 subfamily.</text>
</comment>